<sequence>MSETLKRLSAVIESRKPANGGDPDKSYVARLFSKGDDAILKKIGEEATELVMAAKDARAGADKSKVLYECADLWFHSAVLLAQFDLTPQDVVNELARREGISGIEEKAARKAD</sequence>
<gene>
    <name evidence="1" type="primary">hisE</name>
    <name type="ordered locus">mma_3281</name>
</gene>
<protein>
    <recommendedName>
        <fullName evidence="1">Phosphoribosyl-ATP pyrophosphatase</fullName>
        <shortName evidence="1">PRA-PH</shortName>
        <ecNumber evidence="1">3.6.1.31</ecNumber>
    </recommendedName>
</protein>
<comment type="catalytic activity">
    <reaction evidence="1">
        <text>1-(5-phospho-beta-D-ribosyl)-ATP + H2O = 1-(5-phospho-beta-D-ribosyl)-5'-AMP + diphosphate + H(+)</text>
        <dbReference type="Rhea" id="RHEA:22828"/>
        <dbReference type="ChEBI" id="CHEBI:15377"/>
        <dbReference type="ChEBI" id="CHEBI:15378"/>
        <dbReference type="ChEBI" id="CHEBI:33019"/>
        <dbReference type="ChEBI" id="CHEBI:59457"/>
        <dbReference type="ChEBI" id="CHEBI:73183"/>
        <dbReference type="EC" id="3.6.1.31"/>
    </reaction>
</comment>
<comment type="pathway">
    <text evidence="1">Amino-acid biosynthesis; L-histidine biosynthesis; L-histidine from 5-phospho-alpha-D-ribose 1-diphosphate: step 2/9.</text>
</comment>
<comment type="subcellular location">
    <subcellularLocation>
        <location evidence="1">Cytoplasm</location>
    </subcellularLocation>
</comment>
<comment type="similarity">
    <text evidence="1">Belongs to the PRA-PH family.</text>
</comment>
<organism>
    <name type="scientific">Janthinobacterium sp. (strain Marseille)</name>
    <name type="common">Minibacterium massiliensis</name>
    <dbReference type="NCBI Taxonomy" id="375286"/>
    <lineage>
        <taxon>Bacteria</taxon>
        <taxon>Pseudomonadati</taxon>
        <taxon>Pseudomonadota</taxon>
        <taxon>Betaproteobacteria</taxon>
        <taxon>Burkholderiales</taxon>
        <taxon>Oxalobacteraceae</taxon>
        <taxon>Janthinobacterium</taxon>
    </lineage>
</organism>
<keyword id="KW-0028">Amino-acid biosynthesis</keyword>
<keyword id="KW-0067">ATP-binding</keyword>
<keyword id="KW-0963">Cytoplasm</keyword>
<keyword id="KW-0368">Histidine biosynthesis</keyword>
<keyword id="KW-0378">Hydrolase</keyword>
<keyword id="KW-0547">Nucleotide-binding</keyword>
<feature type="chain" id="PRO_1000063340" description="Phosphoribosyl-ATP pyrophosphatase">
    <location>
        <begin position="1"/>
        <end position="113"/>
    </location>
</feature>
<name>HIS2_JANMA</name>
<proteinExistence type="inferred from homology"/>
<dbReference type="EC" id="3.6.1.31" evidence="1"/>
<dbReference type="EMBL" id="CP000269">
    <property type="protein sequence ID" value="ABR88597.1"/>
    <property type="molecule type" value="Genomic_DNA"/>
</dbReference>
<dbReference type="RefSeq" id="WP_012081124.1">
    <property type="nucleotide sequence ID" value="NC_009659.1"/>
</dbReference>
<dbReference type="SMR" id="A6T374"/>
<dbReference type="STRING" id="375286.mma_3281"/>
<dbReference type="KEGG" id="mms:mma_3281"/>
<dbReference type="eggNOG" id="COG0140">
    <property type="taxonomic scope" value="Bacteria"/>
</dbReference>
<dbReference type="HOGENOM" id="CLU_123337_1_2_4"/>
<dbReference type="OrthoDB" id="9814738at2"/>
<dbReference type="UniPathway" id="UPA00031">
    <property type="reaction ID" value="UER00007"/>
</dbReference>
<dbReference type="Proteomes" id="UP000006388">
    <property type="component" value="Chromosome"/>
</dbReference>
<dbReference type="GO" id="GO:0005737">
    <property type="term" value="C:cytoplasm"/>
    <property type="evidence" value="ECO:0007669"/>
    <property type="project" value="UniProtKB-SubCell"/>
</dbReference>
<dbReference type="GO" id="GO:0005524">
    <property type="term" value="F:ATP binding"/>
    <property type="evidence" value="ECO:0007669"/>
    <property type="project" value="UniProtKB-KW"/>
</dbReference>
<dbReference type="GO" id="GO:0004636">
    <property type="term" value="F:phosphoribosyl-ATP diphosphatase activity"/>
    <property type="evidence" value="ECO:0007669"/>
    <property type="project" value="UniProtKB-UniRule"/>
</dbReference>
<dbReference type="GO" id="GO:0000105">
    <property type="term" value="P:L-histidine biosynthetic process"/>
    <property type="evidence" value="ECO:0007669"/>
    <property type="project" value="UniProtKB-UniRule"/>
</dbReference>
<dbReference type="CDD" id="cd11534">
    <property type="entry name" value="NTP-PPase_HisIE_like"/>
    <property type="match status" value="1"/>
</dbReference>
<dbReference type="Gene3D" id="1.10.287.1080">
    <property type="entry name" value="MazG-like"/>
    <property type="match status" value="1"/>
</dbReference>
<dbReference type="HAMAP" id="MF_01020">
    <property type="entry name" value="HisE"/>
    <property type="match status" value="1"/>
</dbReference>
<dbReference type="InterPro" id="IPR008179">
    <property type="entry name" value="HisE"/>
</dbReference>
<dbReference type="InterPro" id="IPR021130">
    <property type="entry name" value="PRib-ATP_PPHydrolase-like"/>
</dbReference>
<dbReference type="NCBIfam" id="TIGR03188">
    <property type="entry name" value="histidine_hisI"/>
    <property type="match status" value="1"/>
</dbReference>
<dbReference type="NCBIfam" id="NF001611">
    <property type="entry name" value="PRK00400.1-3"/>
    <property type="match status" value="1"/>
</dbReference>
<dbReference type="PANTHER" id="PTHR42945">
    <property type="entry name" value="HISTIDINE BIOSYNTHESIS BIFUNCTIONAL PROTEIN"/>
    <property type="match status" value="1"/>
</dbReference>
<dbReference type="PANTHER" id="PTHR42945:SF9">
    <property type="entry name" value="HISTIDINE BIOSYNTHESIS BIFUNCTIONAL PROTEIN HISIE"/>
    <property type="match status" value="1"/>
</dbReference>
<dbReference type="Pfam" id="PF01503">
    <property type="entry name" value="PRA-PH"/>
    <property type="match status" value="1"/>
</dbReference>
<dbReference type="SUPFAM" id="SSF101386">
    <property type="entry name" value="all-alpha NTP pyrophosphatases"/>
    <property type="match status" value="1"/>
</dbReference>
<accession>A6T374</accession>
<reference key="1">
    <citation type="journal article" date="2007" name="PLoS Genet.">
        <title>Genome analysis of Minibacterium massiliensis highlights the convergent evolution of water-living bacteria.</title>
        <authorList>
            <person name="Audic S."/>
            <person name="Robert C."/>
            <person name="Campagna B."/>
            <person name="Parinello H."/>
            <person name="Claverie J.-M."/>
            <person name="Raoult D."/>
            <person name="Drancourt M."/>
        </authorList>
    </citation>
    <scope>NUCLEOTIDE SEQUENCE [LARGE SCALE GENOMIC DNA]</scope>
    <source>
        <strain>Marseille</strain>
    </source>
</reference>
<evidence type="ECO:0000255" key="1">
    <source>
        <dbReference type="HAMAP-Rule" id="MF_01020"/>
    </source>
</evidence>